<name>DNAK_MARMS</name>
<reference key="1">
    <citation type="submission" date="2007-06" db="EMBL/GenBank/DDBJ databases">
        <title>Complete sequence of Marinomonas sp. MWYL1.</title>
        <authorList>
            <consortium name="US DOE Joint Genome Institute"/>
            <person name="Copeland A."/>
            <person name="Lucas S."/>
            <person name="Lapidus A."/>
            <person name="Barry K."/>
            <person name="Glavina del Rio T."/>
            <person name="Dalin E."/>
            <person name="Tice H."/>
            <person name="Pitluck S."/>
            <person name="Kiss H."/>
            <person name="Brettin T."/>
            <person name="Bruce D."/>
            <person name="Detter J.C."/>
            <person name="Han C."/>
            <person name="Schmutz J."/>
            <person name="Larimer F."/>
            <person name="Land M."/>
            <person name="Hauser L."/>
            <person name="Kyrpides N."/>
            <person name="Kim E."/>
            <person name="Johnston A.W.B."/>
            <person name="Todd J.D."/>
            <person name="Rogers R."/>
            <person name="Wexler M."/>
            <person name="Bond P.L."/>
            <person name="Li Y."/>
            <person name="Richardson P."/>
        </authorList>
    </citation>
    <scope>NUCLEOTIDE SEQUENCE [LARGE SCALE GENOMIC DNA]</scope>
    <source>
        <strain>MWYL1</strain>
    </source>
</reference>
<evidence type="ECO:0000255" key="1">
    <source>
        <dbReference type="HAMAP-Rule" id="MF_00332"/>
    </source>
</evidence>
<evidence type="ECO:0000256" key="2">
    <source>
        <dbReference type="SAM" id="MobiDB-lite"/>
    </source>
</evidence>
<sequence>MGRIIGIDLGTTNSCVAVLDGEKARVIENAEGDRTTPSIVAFAEDGEVLVGQSAKRQAVTNPTNTLFAVKRLIGRKFKDDVVQKDISMVPYKIIAADNGDAWVEVKGDKKAPPQISAEVLKKMKKTAEDYLGEKVTEAVITVPAYFNDSQRQATKDAGKIAGLEVKRIINEPTAAALAYGLDKSSGDSTIAVYDLGGGTFDISIIEIADVDGEKQFEVLSTNGDTFLGGEDFDMRVIEYLAAEFKKSSGIDLHNDPLALQRLKEAGEKAKVELSSSSQTEVNLPYITADATGPKHLNVKLTRSKLESLVEELVLKSLEPCRQALKDADLTASDIDEVILVGGQTRMPLVQAKVTEFFGKEPRKDVNPDEAVAIGASIQGAVLSGDVKDVLLLDVTPLSLGIETMGGVMTTLIEKNTTIPTKKSQTFSTAEDNQNAVTIHALQGERKQASQNKSLGRFDLADIPPAPRGVPQIEVSFDIDANGILSVSAKDKATGKEQSIVIKSSSGLSDEEVEKMVQDAEANAEEDRKFEELVQVRNTADGMIHATRKTLVDAGDKATAEEKEAIETAITELEEALTSNDKEKIEEKTNALTQASGTLAQKMYAEAEAGAQPAEGEQAKSQDDAVDAEFEEVKEDKK</sequence>
<organism>
    <name type="scientific">Marinomonas sp. (strain MWYL1)</name>
    <dbReference type="NCBI Taxonomy" id="400668"/>
    <lineage>
        <taxon>Bacteria</taxon>
        <taxon>Pseudomonadati</taxon>
        <taxon>Pseudomonadota</taxon>
        <taxon>Gammaproteobacteria</taxon>
        <taxon>Oceanospirillales</taxon>
        <taxon>Oceanospirillaceae</taxon>
        <taxon>Marinomonas</taxon>
    </lineage>
</organism>
<dbReference type="EMBL" id="CP000749">
    <property type="protein sequence ID" value="ABR72861.1"/>
    <property type="molecule type" value="Genomic_DNA"/>
</dbReference>
<dbReference type="SMR" id="A6W2D2"/>
<dbReference type="STRING" id="400668.Mmwyl1_3964"/>
<dbReference type="KEGG" id="mmw:Mmwyl1_3964"/>
<dbReference type="eggNOG" id="COG0443">
    <property type="taxonomic scope" value="Bacteria"/>
</dbReference>
<dbReference type="HOGENOM" id="CLU_005965_2_1_6"/>
<dbReference type="OrthoDB" id="9766019at2"/>
<dbReference type="GO" id="GO:0005524">
    <property type="term" value="F:ATP binding"/>
    <property type="evidence" value="ECO:0007669"/>
    <property type="project" value="UniProtKB-UniRule"/>
</dbReference>
<dbReference type="GO" id="GO:0140662">
    <property type="term" value="F:ATP-dependent protein folding chaperone"/>
    <property type="evidence" value="ECO:0007669"/>
    <property type="project" value="InterPro"/>
</dbReference>
<dbReference type="GO" id="GO:0051082">
    <property type="term" value="F:unfolded protein binding"/>
    <property type="evidence" value="ECO:0007669"/>
    <property type="project" value="InterPro"/>
</dbReference>
<dbReference type="CDD" id="cd10234">
    <property type="entry name" value="ASKHA_NBD_HSP70_DnaK-like"/>
    <property type="match status" value="1"/>
</dbReference>
<dbReference type="FunFam" id="2.60.34.10:FF:000014">
    <property type="entry name" value="Chaperone protein DnaK HSP70"/>
    <property type="match status" value="1"/>
</dbReference>
<dbReference type="FunFam" id="3.30.30.30:FF:000003">
    <property type="entry name" value="Heat shock protein 9"/>
    <property type="match status" value="1"/>
</dbReference>
<dbReference type="FunFam" id="1.20.1270.10:FF:000001">
    <property type="entry name" value="Molecular chaperone DnaK"/>
    <property type="match status" value="1"/>
</dbReference>
<dbReference type="FunFam" id="3.30.420.40:FF:000004">
    <property type="entry name" value="Molecular chaperone DnaK"/>
    <property type="match status" value="1"/>
</dbReference>
<dbReference type="FunFam" id="3.90.640.10:FF:000003">
    <property type="entry name" value="Molecular chaperone DnaK"/>
    <property type="match status" value="1"/>
</dbReference>
<dbReference type="Gene3D" id="1.20.1270.10">
    <property type="match status" value="1"/>
</dbReference>
<dbReference type="Gene3D" id="3.30.420.40">
    <property type="match status" value="2"/>
</dbReference>
<dbReference type="Gene3D" id="3.90.640.10">
    <property type="entry name" value="Actin, Chain A, domain 4"/>
    <property type="match status" value="1"/>
</dbReference>
<dbReference type="Gene3D" id="2.60.34.10">
    <property type="entry name" value="Substrate Binding Domain Of DNAk, Chain A, domain 1"/>
    <property type="match status" value="1"/>
</dbReference>
<dbReference type="HAMAP" id="MF_00332">
    <property type="entry name" value="DnaK"/>
    <property type="match status" value="1"/>
</dbReference>
<dbReference type="InterPro" id="IPR043129">
    <property type="entry name" value="ATPase_NBD"/>
</dbReference>
<dbReference type="InterPro" id="IPR012725">
    <property type="entry name" value="Chaperone_DnaK"/>
</dbReference>
<dbReference type="InterPro" id="IPR018181">
    <property type="entry name" value="Heat_shock_70_CS"/>
</dbReference>
<dbReference type="InterPro" id="IPR029048">
    <property type="entry name" value="HSP70_C_sf"/>
</dbReference>
<dbReference type="InterPro" id="IPR029047">
    <property type="entry name" value="HSP70_peptide-bd_sf"/>
</dbReference>
<dbReference type="InterPro" id="IPR013126">
    <property type="entry name" value="Hsp_70_fam"/>
</dbReference>
<dbReference type="NCBIfam" id="NF001413">
    <property type="entry name" value="PRK00290.1"/>
    <property type="match status" value="1"/>
</dbReference>
<dbReference type="NCBIfam" id="NF003520">
    <property type="entry name" value="PRK05183.1"/>
    <property type="match status" value="1"/>
</dbReference>
<dbReference type="NCBIfam" id="TIGR02350">
    <property type="entry name" value="prok_dnaK"/>
    <property type="match status" value="1"/>
</dbReference>
<dbReference type="PANTHER" id="PTHR19375">
    <property type="entry name" value="HEAT SHOCK PROTEIN 70KDA"/>
    <property type="match status" value="1"/>
</dbReference>
<dbReference type="Pfam" id="PF00012">
    <property type="entry name" value="HSP70"/>
    <property type="match status" value="1"/>
</dbReference>
<dbReference type="PRINTS" id="PR00301">
    <property type="entry name" value="HEATSHOCK70"/>
</dbReference>
<dbReference type="SUPFAM" id="SSF53067">
    <property type="entry name" value="Actin-like ATPase domain"/>
    <property type="match status" value="2"/>
</dbReference>
<dbReference type="SUPFAM" id="SSF100934">
    <property type="entry name" value="Heat shock protein 70kD (HSP70), C-terminal subdomain"/>
    <property type="match status" value="1"/>
</dbReference>
<dbReference type="SUPFAM" id="SSF100920">
    <property type="entry name" value="Heat shock protein 70kD (HSP70), peptide-binding domain"/>
    <property type="match status" value="1"/>
</dbReference>
<dbReference type="PROSITE" id="PS00297">
    <property type="entry name" value="HSP70_1"/>
    <property type="match status" value="1"/>
</dbReference>
<dbReference type="PROSITE" id="PS00329">
    <property type="entry name" value="HSP70_2"/>
    <property type="match status" value="1"/>
</dbReference>
<dbReference type="PROSITE" id="PS01036">
    <property type="entry name" value="HSP70_3"/>
    <property type="match status" value="1"/>
</dbReference>
<proteinExistence type="inferred from homology"/>
<accession>A6W2D2</accession>
<feature type="chain" id="PRO_1000079232" description="Chaperone protein DnaK">
    <location>
        <begin position="1"/>
        <end position="637"/>
    </location>
</feature>
<feature type="region of interest" description="Disordered" evidence="2">
    <location>
        <begin position="603"/>
        <end position="637"/>
    </location>
</feature>
<feature type="compositionally biased region" description="Low complexity" evidence="2">
    <location>
        <begin position="605"/>
        <end position="615"/>
    </location>
</feature>
<feature type="compositionally biased region" description="Acidic residues" evidence="2">
    <location>
        <begin position="623"/>
        <end position="637"/>
    </location>
</feature>
<feature type="modified residue" description="Phosphothreonine; by autocatalysis" evidence="1">
    <location>
        <position position="199"/>
    </location>
</feature>
<comment type="function">
    <text evidence="1">Acts as a chaperone.</text>
</comment>
<comment type="induction">
    <text evidence="1">By stress conditions e.g. heat shock.</text>
</comment>
<comment type="similarity">
    <text evidence="1">Belongs to the heat shock protein 70 family.</text>
</comment>
<protein>
    <recommendedName>
        <fullName evidence="1">Chaperone protein DnaK</fullName>
    </recommendedName>
    <alternativeName>
        <fullName evidence="1">HSP70</fullName>
    </alternativeName>
    <alternativeName>
        <fullName evidence="1">Heat shock 70 kDa protein</fullName>
    </alternativeName>
    <alternativeName>
        <fullName evidence="1">Heat shock protein 70</fullName>
    </alternativeName>
</protein>
<gene>
    <name evidence="1" type="primary">dnaK</name>
    <name type="ordered locus">Mmwyl1_3964</name>
</gene>
<keyword id="KW-0067">ATP-binding</keyword>
<keyword id="KW-0143">Chaperone</keyword>
<keyword id="KW-0547">Nucleotide-binding</keyword>
<keyword id="KW-0597">Phosphoprotein</keyword>
<keyword id="KW-0346">Stress response</keyword>